<evidence type="ECO:0000255" key="1">
    <source>
        <dbReference type="HAMAP-Rule" id="MF_00444"/>
    </source>
</evidence>
<name>CLPP_DEIGD</name>
<protein>
    <recommendedName>
        <fullName evidence="1">ATP-dependent Clp protease proteolytic subunit</fullName>
        <ecNumber evidence="1">3.4.21.92</ecNumber>
    </recommendedName>
    <alternativeName>
        <fullName evidence="1">Endopeptidase Clp</fullName>
    </alternativeName>
</protein>
<feature type="chain" id="PRO_0000252813" description="ATP-dependent Clp protease proteolytic subunit">
    <location>
        <begin position="1"/>
        <end position="200"/>
    </location>
</feature>
<feature type="active site" description="Nucleophile" evidence="1">
    <location>
        <position position="98"/>
    </location>
</feature>
<feature type="active site" evidence="1">
    <location>
        <position position="123"/>
    </location>
</feature>
<accession>Q1IWD9</accession>
<comment type="function">
    <text evidence="1">Cleaves peptides in various proteins in a process that requires ATP hydrolysis. Has a chymotrypsin-like activity. Plays a major role in the degradation of misfolded proteins.</text>
</comment>
<comment type="catalytic activity">
    <reaction evidence="1">
        <text>Hydrolysis of proteins to small peptides in the presence of ATP and magnesium. alpha-casein is the usual test substrate. In the absence of ATP, only oligopeptides shorter than five residues are hydrolyzed (such as succinyl-Leu-Tyr-|-NHMec, and Leu-Tyr-Leu-|-Tyr-Trp, in which cleavage of the -Tyr-|-Leu- and -Tyr-|-Trp bonds also occurs).</text>
        <dbReference type="EC" id="3.4.21.92"/>
    </reaction>
</comment>
<comment type="subunit">
    <text evidence="1">Fourteen ClpP subunits assemble into 2 heptameric rings which stack back to back to give a disk-like structure with a central cavity, resembling the structure of eukaryotic proteasomes.</text>
</comment>
<comment type="subcellular location">
    <subcellularLocation>
        <location evidence="1">Cytoplasm</location>
    </subcellularLocation>
</comment>
<comment type="similarity">
    <text evidence="1">Belongs to the peptidase S14 family.</text>
</comment>
<dbReference type="EC" id="3.4.21.92" evidence="1"/>
<dbReference type="EMBL" id="CP000359">
    <property type="protein sequence ID" value="ABF46445.1"/>
    <property type="molecule type" value="Genomic_DNA"/>
</dbReference>
<dbReference type="SMR" id="Q1IWD9"/>
<dbReference type="STRING" id="319795.Dgeo_2151"/>
<dbReference type="MEROPS" id="S14.001"/>
<dbReference type="KEGG" id="dge:Dgeo_2151"/>
<dbReference type="eggNOG" id="COG0740">
    <property type="taxonomic scope" value="Bacteria"/>
</dbReference>
<dbReference type="HOGENOM" id="CLU_058707_3_3_0"/>
<dbReference type="Proteomes" id="UP000002431">
    <property type="component" value="Chromosome"/>
</dbReference>
<dbReference type="GO" id="GO:0005737">
    <property type="term" value="C:cytoplasm"/>
    <property type="evidence" value="ECO:0007669"/>
    <property type="project" value="UniProtKB-SubCell"/>
</dbReference>
<dbReference type="GO" id="GO:0009368">
    <property type="term" value="C:endopeptidase Clp complex"/>
    <property type="evidence" value="ECO:0007669"/>
    <property type="project" value="TreeGrafter"/>
</dbReference>
<dbReference type="GO" id="GO:0004176">
    <property type="term" value="F:ATP-dependent peptidase activity"/>
    <property type="evidence" value="ECO:0007669"/>
    <property type="project" value="InterPro"/>
</dbReference>
<dbReference type="GO" id="GO:0051117">
    <property type="term" value="F:ATPase binding"/>
    <property type="evidence" value="ECO:0007669"/>
    <property type="project" value="TreeGrafter"/>
</dbReference>
<dbReference type="GO" id="GO:0004252">
    <property type="term" value="F:serine-type endopeptidase activity"/>
    <property type="evidence" value="ECO:0007669"/>
    <property type="project" value="UniProtKB-UniRule"/>
</dbReference>
<dbReference type="GO" id="GO:0006515">
    <property type="term" value="P:protein quality control for misfolded or incompletely synthesized proteins"/>
    <property type="evidence" value="ECO:0007669"/>
    <property type="project" value="TreeGrafter"/>
</dbReference>
<dbReference type="CDD" id="cd07017">
    <property type="entry name" value="S14_ClpP_2"/>
    <property type="match status" value="1"/>
</dbReference>
<dbReference type="FunFam" id="3.90.226.10:FF:000001">
    <property type="entry name" value="ATP-dependent Clp protease proteolytic subunit"/>
    <property type="match status" value="1"/>
</dbReference>
<dbReference type="Gene3D" id="3.90.226.10">
    <property type="entry name" value="2-enoyl-CoA Hydratase, Chain A, domain 1"/>
    <property type="match status" value="1"/>
</dbReference>
<dbReference type="HAMAP" id="MF_00444">
    <property type="entry name" value="ClpP"/>
    <property type="match status" value="1"/>
</dbReference>
<dbReference type="InterPro" id="IPR001907">
    <property type="entry name" value="ClpP"/>
</dbReference>
<dbReference type="InterPro" id="IPR029045">
    <property type="entry name" value="ClpP/crotonase-like_dom_sf"/>
</dbReference>
<dbReference type="InterPro" id="IPR023562">
    <property type="entry name" value="ClpP/TepA"/>
</dbReference>
<dbReference type="NCBIfam" id="NF001368">
    <property type="entry name" value="PRK00277.1"/>
    <property type="match status" value="1"/>
</dbReference>
<dbReference type="NCBIfam" id="NF009205">
    <property type="entry name" value="PRK12553.1"/>
    <property type="match status" value="1"/>
</dbReference>
<dbReference type="NCBIfam" id="NF011090">
    <property type="entry name" value="PRK14513.1"/>
    <property type="match status" value="1"/>
</dbReference>
<dbReference type="PANTHER" id="PTHR10381">
    <property type="entry name" value="ATP-DEPENDENT CLP PROTEASE PROTEOLYTIC SUBUNIT"/>
    <property type="match status" value="1"/>
</dbReference>
<dbReference type="PANTHER" id="PTHR10381:SF70">
    <property type="entry name" value="ATP-DEPENDENT CLP PROTEASE PROTEOLYTIC SUBUNIT"/>
    <property type="match status" value="1"/>
</dbReference>
<dbReference type="Pfam" id="PF00574">
    <property type="entry name" value="CLP_protease"/>
    <property type="match status" value="1"/>
</dbReference>
<dbReference type="PRINTS" id="PR00127">
    <property type="entry name" value="CLPPROTEASEP"/>
</dbReference>
<dbReference type="SUPFAM" id="SSF52096">
    <property type="entry name" value="ClpP/crotonase"/>
    <property type="match status" value="1"/>
</dbReference>
<gene>
    <name evidence="1" type="primary">clpP</name>
    <name type="ordered locus">Dgeo_2151</name>
</gene>
<proteinExistence type="inferred from homology"/>
<keyword id="KW-0963">Cytoplasm</keyword>
<keyword id="KW-0378">Hydrolase</keyword>
<keyword id="KW-0645">Protease</keyword>
<keyword id="KW-0720">Serine protease</keyword>
<sequence length="200" mass="22635">MSVIPYVIEQTGRGERMYDIYSRLLKDRIIFVGTPIESQMANTIVAQLLLLDSQNPDQEIQMYINCPGGEVYAGLAIYDTMRYIKAPVSTICVGIAMSMGSVLLMAGDKGKRLALPNSRIMIHQGSAGFRGNTPDLEVQAKEVLRLRDTLIDIYHRHTNLPHEKLLRDMERDYFMSPYEAQQYGLIDSVIEHTRQPEAAL</sequence>
<reference key="1">
    <citation type="submission" date="2006-04" db="EMBL/GenBank/DDBJ databases">
        <title>Complete sequence of chromosome of Deinococcus geothermalis DSM 11300.</title>
        <authorList>
            <person name="Copeland A."/>
            <person name="Lucas S."/>
            <person name="Lapidus A."/>
            <person name="Barry K."/>
            <person name="Detter J.C."/>
            <person name="Glavina del Rio T."/>
            <person name="Hammon N."/>
            <person name="Israni S."/>
            <person name="Dalin E."/>
            <person name="Tice H."/>
            <person name="Pitluck S."/>
            <person name="Brettin T."/>
            <person name="Bruce D."/>
            <person name="Han C."/>
            <person name="Tapia R."/>
            <person name="Saunders E."/>
            <person name="Gilna P."/>
            <person name="Schmutz J."/>
            <person name="Larimer F."/>
            <person name="Land M."/>
            <person name="Hauser L."/>
            <person name="Kyrpides N."/>
            <person name="Kim E."/>
            <person name="Daly M.J."/>
            <person name="Fredrickson J.K."/>
            <person name="Makarova K.S."/>
            <person name="Gaidamakova E.K."/>
            <person name="Zhai M."/>
            <person name="Richardson P."/>
        </authorList>
    </citation>
    <scope>NUCLEOTIDE SEQUENCE [LARGE SCALE GENOMIC DNA]</scope>
    <source>
        <strain>DSM 11300 / CIP 105573 / AG-3a</strain>
    </source>
</reference>
<organism>
    <name type="scientific">Deinococcus geothermalis (strain DSM 11300 / CIP 105573 / AG-3a)</name>
    <dbReference type="NCBI Taxonomy" id="319795"/>
    <lineage>
        <taxon>Bacteria</taxon>
        <taxon>Thermotogati</taxon>
        <taxon>Deinococcota</taxon>
        <taxon>Deinococci</taxon>
        <taxon>Deinococcales</taxon>
        <taxon>Deinococcaceae</taxon>
        <taxon>Deinococcus</taxon>
    </lineage>
</organism>